<keyword id="KW-1185">Reference proteome</keyword>
<gene>
    <name type="primary">yneG</name>
    <name type="ordered locus">b1523</name>
    <name type="ordered locus">JW1516</name>
</gene>
<sequence>MQSLDPLFARLSRSKFRSRFRLGMKERQYCLEKGAPVIEQHAADFVAKRLAPALPANDGKQTPMRGHPVFIAQHATATCCRGCLAKWHNIPQGVSLSEEQQRYIVAVIYHWLVVQMNQP</sequence>
<feature type="chain" id="PRO_0000168949" description="Uncharacterized protein YneG">
    <location>
        <begin position="1"/>
        <end position="119"/>
    </location>
</feature>
<organism>
    <name type="scientific">Escherichia coli (strain K12)</name>
    <dbReference type="NCBI Taxonomy" id="83333"/>
    <lineage>
        <taxon>Bacteria</taxon>
        <taxon>Pseudomonadati</taxon>
        <taxon>Pseudomonadota</taxon>
        <taxon>Gammaproteobacteria</taxon>
        <taxon>Enterobacterales</taxon>
        <taxon>Enterobacteriaceae</taxon>
        <taxon>Escherichia</taxon>
    </lineage>
</organism>
<protein>
    <recommendedName>
        <fullName>Uncharacterized protein YneG</fullName>
    </recommendedName>
</protein>
<reference key="1">
    <citation type="journal article" date="1997" name="Science">
        <title>The complete genome sequence of Escherichia coli K-12.</title>
        <authorList>
            <person name="Blattner F.R."/>
            <person name="Plunkett G. III"/>
            <person name="Bloch C.A."/>
            <person name="Perna N.T."/>
            <person name="Burland V."/>
            <person name="Riley M."/>
            <person name="Collado-Vides J."/>
            <person name="Glasner J.D."/>
            <person name="Rode C.K."/>
            <person name="Mayhew G.F."/>
            <person name="Gregor J."/>
            <person name="Davis N.W."/>
            <person name="Kirkpatrick H.A."/>
            <person name="Goeden M.A."/>
            <person name="Rose D.J."/>
            <person name="Mau B."/>
            <person name="Shao Y."/>
        </authorList>
    </citation>
    <scope>NUCLEOTIDE SEQUENCE [LARGE SCALE GENOMIC DNA]</scope>
    <source>
        <strain>K12 / MG1655 / ATCC 47076</strain>
    </source>
</reference>
<reference key="2">
    <citation type="journal article" date="2006" name="Mol. Syst. Biol.">
        <title>Highly accurate genome sequences of Escherichia coli K-12 strains MG1655 and W3110.</title>
        <authorList>
            <person name="Hayashi K."/>
            <person name="Morooka N."/>
            <person name="Yamamoto Y."/>
            <person name="Fujita K."/>
            <person name="Isono K."/>
            <person name="Choi S."/>
            <person name="Ohtsubo E."/>
            <person name="Baba T."/>
            <person name="Wanner B.L."/>
            <person name="Mori H."/>
            <person name="Horiuchi T."/>
        </authorList>
    </citation>
    <scope>NUCLEOTIDE SEQUENCE [LARGE SCALE GENOMIC DNA]</scope>
    <source>
        <strain>K12 / W3110 / ATCC 27325 / DSM 5911</strain>
    </source>
</reference>
<accession>P76148</accession>
<accession>Q2MB95</accession>
<proteinExistence type="predicted"/>
<dbReference type="EMBL" id="U00096">
    <property type="protein sequence ID" value="AAC74596.1"/>
    <property type="molecule type" value="Genomic_DNA"/>
</dbReference>
<dbReference type="EMBL" id="AP009048">
    <property type="protein sequence ID" value="BAE76461.1"/>
    <property type="molecule type" value="Genomic_DNA"/>
</dbReference>
<dbReference type="PIR" id="F64906">
    <property type="entry name" value="F64906"/>
</dbReference>
<dbReference type="RefSeq" id="NP_416040.1">
    <property type="nucleotide sequence ID" value="NC_000913.3"/>
</dbReference>
<dbReference type="RefSeq" id="WP_001191027.1">
    <property type="nucleotide sequence ID" value="NZ_STEB01000003.1"/>
</dbReference>
<dbReference type="BioGRID" id="4261694">
    <property type="interactions" value="33"/>
</dbReference>
<dbReference type="BioGRID" id="850531">
    <property type="interactions" value="2"/>
</dbReference>
<dbReference type="DIP" id="DIP-12756N"/>
<dbReference type="FunCoup" id="P76148">
    <property type="interactions" value="147"/>
</dbReference>
<dbReference type="IntAct" id="P76148">
    <property type="interactions" value="24"/>
</dbReference>
<dbReference type="STRING" id="511145.b1523"/>
<dbReference type="PaxDb" id="511145-b1523"/>
<dbReference type="EnsemblBacteria" id="AAC74596">
    <property type="protein sequence ID" value="AAC74596"/>
    <property type="gene ID" value="b1523"/>
</dbReference>
<dbReference type="GeneID" id="946171"/>
<dbReference type="KEGG" id="ecj:JW1516"/>
<dbReference type="KEGG" id="eco:b1523"/>
<dbReference type="KEGG" id="ecoc:C3026_08805"/>
<dbReference type="PATRIC" id="fig|511145.12.peg.1592"/>
<dbReference type="EchoBASE" id="EB3576"/>
<dbReference type="eggNOG" id="ENOG5032RYJ">
    <property type="taxonomic scope" value="Bacteria"/>
</dbReference>
<dbReference type="HOGENOM" id="CLU_132148_1_0_6"/>
<dbReference type="InParanoid" id="P76148"/>
<dbReference type="OMA" id="QHATGTC"/>
<dbReference type="OrthoDB" id="3781311at2"/>
<dbReference type="PhylomeDB" id="P76148"/>
<dbReference type="BioCyc" id="EcoCyc:G6809-MONOMER"/>
<dbReference type="PRO" id="PR:P76148"/>
<dbReference type="Proteomes" id="UP000000625">
    <property type="component" value="Chromosome"/>
</dbReference>
<dbReference type="InterPro" id="IPR020378">
    <property type="entry name" value="DUF4186"/>
</dbReference>
<dbReference type="Pfam" id="PF13811">
    <property type="entry name" value="DUF4186"/>
    <property type="match status" value="1"/>
</dbReference>
<name>YNEG_ECOLI</name>